<proteinExistence type="inferred from homology"/>
<keyword id="KW-0028">Amino-acid biosynthesis</keyword>
<keyword id="KW-0055">Arginine biosynthesis</keyword>
<keyword id="KW-0067">ATP-binding</keyword>
<keyword id="KW-0963">Cytoplasm</keyword>
<keyword id="KW-0418">Kinase</keyword>
<keyword id="KW-0547">Nucleotide-binding</keyword>
<keyword id="KW-0808">Transferase</keyword>
<name>ARGB_BURP0</name>
<feature type="chain" id="PRO_1000010490" description="Acetylglutamate kinase">
    <location>
        <begin position="1"/>
        <end position="299"/>
    </location>
</feature>
<feature type="binding site" evidence="1">
    <location>
        <begin position="72"/>
        <end position="73"/>
    </location>
    <ligand>
        <name>substrate</name>
    </ligand>
</feature>
<feature type="binding site" evidence="1">
    <location>
        <position position="94"/>
    </location>
    <ligand>
        <name>substrate</name>
    </ligand>
</feature>
<feature type="binding site" evidence="1">
    <location>
        <position position="196"/>
    </location>
    <ligand>
        <name>substrate</name>
    </ligand>
</feature>
<feature type="site" description="Transition state stabilizer" evidence="1">
    <location>
        <position position="37"/>
    </location>
</feature>
<feature type="site" description="Transition state stabilizer" evidence="1">
    <location>
        <position position="256"/>
    </location>
</feature>
<reference key="1">
    <citation type="journal article" date="2010" name="Genome Biol. Evol.">
        <title>Continuing evolution of Burkholderia mallei through genome reduction and large-scale rearrangements.</title>
        <authorList>
            <person name="Losada L."/>
            <person name="Ronning C.M."/>
            <person name="DeShazer D."/>
            <person name="Woods D."/>
            <person name="Fedorova N."/>
            <person name="Kim H.S."/>
            <person name="Shabalina S.A."/>
            <person name="Pearson T.R."/>
            <person name="Brinkac L."/>
            <person name="Tan P."/>
            <person name="Nandi T."/>
            <person name="Crabtree J."/>
            <person name="Badger J."/>
            <person name="Beckstrom-Sternberg S."/>
            <person name="Saqib M."/>
            <person name="Schutzer S.E."/>
            <person name="Keim P."/>
            <person name="Nierman W.C."/>
        </authorList>
    </citation>
    <scope>NUCLEOTIDE SEQUENCE [LARGE SCALE GENOMIC DNA]</scope>
    <source>
        <strain>1106a</strain>
    </source>
</reference>
<gene>
    <name evidence="1" type="primary">argB</name>
    <name type="ordered locus">BURPS1106A_0195</name>
</gene>
<comment type="function">
    <text evidence="1">Catalyzes the ATP-dependent phosphorylation of N-acetyl-L-glutamate.</text>
</comment>
<comment type="catalytic activity">
    <reaction evidence="1">
        <text>N-acetyl-L-glutamate + ATP = N-acetyl-L-glutamyl 5-phosphate + ADP</text>
        <dbReference type="Rhea" id="RHEA:14629"/>
        <dbReference type="ChEBI" id="CHEBI:30616"/>
        <dbReference type="ChEBI" id="CHEBI:44337"/>
        <dbReference type="ChEBI" id="CHEBI:57936"/>
        <dbReference type="ChEBI" id="CHEBI:456216"/>
        <dbReference type="EC" id="2.7.2.8"/>
    </reaction>
</comment>
<comment type="pathway">
    <text evidence="1">Amino-acid biosynthesis; L-arginine biosynthesis; N(2)-acetyl-L-ornithine from L-glutamate: step 2/4.</text>
</comment>
<comment type="subcellular location">
    <subcellularLocation>
        <location evidence="1">Cytoplasm</location>
    </subcellularLocation>
</comment>
<comment type="similarity">
    <text evidence="1">Belongs to the acetylglutamate kinase family. ArgB subfamily.</text>
</comment>
<evidence type="ECO:0000255" key="1">
    <source>
        <dbReference type="HAMAP-Rule" id="MF_00082"/>
    </source>
</evidence>
<accession>A3NQ57</accession>
<organism>
    <name type="scientific">Burkholderia pseudomallei (strain 1106a)</name>
    <dbReference type="NCBI Taxonomy" id="357348"/>
    <lineage>
        <taxon>Bacteria</taxon>
        <taxon>Pseudomonadati</taxon>
        <taxon>Pseudomonadota</taxon>
        <taxon>Betaproteobacteria</taxon>
        <taxon>Burkholderiales</taxon>
        <taxon>Burkholderiaceae</taxon>
        <taxon>Burkholderia</taxon>
        <taxon>pseudomallei group</taxon>
    </lineage>
</organism>
<sequence length="299" mass="32119">MSEPIDLSQISPALKAEILAEALPYIRRYHGKTVVIKYGGNAMTEERLKQGFARDVILLKLVGINPVIVHGGGPQIDQALKKIGKQGTFIQGMRVTDEETMEVVEWVLGGEVQQDIVTLINHFGGHAVGLTGKDGGLIHARKLMMPDRDNPGEYVDIGQVGEVEAINPAVVKALQDDAFIPVISPIGFGEDGLSYNINADLVAGKLATVLNAEKLVMMTNIPGVMDKEGNLLTDLSAREIDALFEDGTISGGMLPKISSALDAAKSGVKSVHIVDGRIEHSVLLEILTEQPFGTMIRSH</sequence>
<protein>
    <recommendedName>
        <fullName evidence="1">Acetylglutamate kinase</fullName>
        <ecNumber evidence="1">2.7.2.8</ecNumber>
    </recommendedName>
    <alternativeName>
        <fullName evidence="1">N-acetyl-L-glutamate 5-phosphotransferase</fullName>
    </alternativeName>
    <alternativeName>
        <fullName evidence="1">NAG kinase</fullName>
        <shortName evidence="1">NAGK</shortName>
    </alternativeName>
</protein>
<dbReference type="EC" id="2.7.2.8" evidence="1"/>
<dbReference type="EMBL" id="CP000572">
    <property type="protein sequence ID" value="ABN89437.1"/>
    <property type="molecule type" value="Genomic_DNA"/>
</dbReference>
<dbReference type="RefSeq" id="WP_004200214.1">
    <property type="nucleotide sequence ID" value="NC_009076.1"/>
</dbReference>
<dbReference type="SMR" id="A3NQ57"/>
<dbReference type="GeneID" id="93058708"/>
<dbReference type="KEGG" id="bpl:BURPS1106A_0195"/>
<dbReference type="HOGENOM" id="CLU_053680_0_0_4"/>
<dbReference type="UniPathway" id="UPA00068">
    <property type="reaction ID" value="UER00107"/>
</dbReference>
<dbReference type="Proteomes" id="UP000006738">
    <property type="component" value="Chromosome I"/>
</dbReference>
<dbReference type="GO" id="GO:0005737">
    <property type="term" value="C:cytoplasm"/>
    <property type="evidence" value="ECO:0007669"/>
    <property type="project" value="UniProtKB-SubCell"/>
</dbReference>
<dbReference type="GO" id="GO:0003991">
    <property type="term" value="F:acetylglutamate kinase activity"/>
    <property type="evidence" value="ECO:0007669"/>
    <property type="project" value="UniProtKB-UniRule"/>
</dbReference>
<dbReference type="GO" id="GO:0005524">
    <property type="term" value="F:ATP binding"/>
    <property type="evidence" value="ECO:0007669"/>
    <property type="project" value="UniProtKB-UniRule"/>
</dbReference>
<dbReference type="GO" id="GO:0042450">
    <property type="term" value="P:arginine biosynthetic process via ornithine"/>
    <property type="evidence" value="ECO:0007669"/>
    <property type="project" value="UniProtKB-UniRule"/>
</dbReference>
<dbReference type="GO" id="GO:0006526">
    <property type="term" value="P:L-arginine biosynthetic process"/>
    <property type="evidence" value="ECO:0007669"/>
    <property type="project" value="UniProtKB-UniPathway"/>
</dbReference>
<dbReference type="CDD" id="cd04250">
    <property type="entry name" value="AAK_NAGK-C"/>
    <property type="match status" value="1"/>
</dbReference>
<dbReference type="FunFam" id="3.40.1160.10:FF:000004">
    <property type="entry name" value="Acetylglutamate kinase"/>
    <property type="match status" value="1"/>
</dbReference>
<dbReference type="Gene3D" id="3.40.1160.10">
    <property type="entry name" value="Acetylglutamate kinase-like"/>
    <property type="match status" value="1"/>
</dbReference>
<dbReference type="HAMAP" id="MF_00082">
    <property type="entry name" value="ArgB"/>
    <property type="match status" value="1"/>
</dbReference>
<dbReference type="InterPro" id="IPR036393">
    <property type="entry name" value="AceGlu_kinase-like_sf"/>
</dbReference>
<dbReference type="InterPro" id="IPR004662">
    <property type="entry name" value="AcgluKinase_fam"/>
</dbReference>
<dbReference type="InterPro" id="IPR037528">
    <property type="entry name" value="ArgB"/>
</dbReference>
<dbReference type="InterPro" id="IPR001048">
    <property type="entry name" value="Asp/Glu/Uridylate_kinase"/>
</dbReference>
<dbReference type="InterPro" id="IPR041727">
    <property type="entry name" value="NAGK-C"/>
</dbReference>
<dbReference type="NCBIfam" id="TIGR00761">
    <property type="entry name" value="argB"/>
    <property type="match status" value="1"/>
</dbReference>
<dbReference type="PANTHER" id="PTHR23342">
    <property type="entry name" value="N-ACETYLGLUTAMATE SYNTHASE"/>
    <property type="match status" value="1"/>
</dbReference>
<dbReference type="PANTHER" id="PTHR23342:SF0">
    <property type="entry name" value="N-ACETYLGLUTAMATE SYNTHASE, MITOCHONDRIAL"/>
    <property type="match status" value="1"/>
</dbReference>
<dbReference type="Pfam" id="PF00696">
    <property type="entry name" value="AA_kinase"/>
    <property type="match status" value="1"/>
</dbReference>
<dbReference type="PIRSF" id="PIRSF000728">
    <property type="entry name" value="NAGK"/>
    <property type="match status" value="1"/>
</dbReference>
<dbReference type="SUPFAM" id="SSF53633">
    <property type="entry name" value="Carbamate kinase-like"/>
    <property type="match status" value="1"/>
</dbReference>